<dbReference type="EMBL" id="CP000285">
    <property type="protein sequence ID" value="ABE57795.1"/>
    <property type="molecule type" value="Genomic_DNA"/>
</dbReference>
<dbReference type="RefSeq" id="WP_011505741.1">
    <property type="nucleotide sequence ID" value="NC_007963.1"/>
</dbReference>
<dbReference type="SMR" id="Q1R0G3"/>
<dbReference type="STRING" id="290398.Csal_0433"/>
<dbReference type="GeneID" id="95333186"/>
<dbReference type="KEGG" id="csa:Csal_0433"/>
<dbReference type="eggNOG" id="COG0094">
    <property type="taxonomic scope" value="Bacteria"/>
</dbReference>
<dbReference type="HOGENOM" id="CLU_061015_2_1_6"/>
<dbReference type="OrthoDB" id="9806626at2"/>
<dbReference type="Proteomes" id="UP000000239">
    <property type="component" value="Chromosome"/>
</dbReference>
<dbReference type="GO" id="GO:1990904">
    <property type="term" value="C:ribonucleoprotein complex"/>
    <property type="evidence" value="ECO:0007669"/>
    <property type="project" value="UniProtKB-KW"/>
</dbReference>
<dbReference type="GO" id="GO:0005840">
    <property type="term" value="C:ribosome"/>
    <property type="evidence" value="ECO:0007669"/>
    <property type="project" value="UniProtKB-KW"/>
</dbReference>
<dbReference type="GO" id="GO:0019843">
    <property type="term" value="F:rRNA binding"/>
    <property type="evidence" value="ECO:0007669"/>
    <property type="project" value="UniProtKB-UniRule"/>
</dbReference>
<dbReference type="GO" id="GO:0003735">
    <property type="term" value="F:structural constituent of ribosome"/>
    <property type="evidence" value="ECO:0007669"/>
    <property type="project" value="InterPro"/>
</dbReference>
<dbReference type="GO" id="GO:0000049">
    <property type="term" value="F:tRNA binding"/>
    <property type="evidence" value="ECO:0007669"/>
    <property type="project" value="UniProtKB-UniRule"/>
</dbReference>
<dbReference type="GO" id="GO:0006412">
    <property type="term" value="P:translation"/>
    <property type="evidence" value="ECO:0007669"/>
    <property type="project" value="UniProtKB-UniRule"/>
</dbReference>
<dbReference type="FunFam" id="3.30.1440.10:FF:000001">
    <property type="entry name" value="50S ribosomal protein L5"/>
    <property type="match status" value="1"/>
</dbReference>
<dbReference type="Gene3D" id="3.30.1440.10">
    <property type="match status" value="1"/>
</dbReference>
<dbReference type="HAMAP" id="MF_01333_B">
    <property type="entry name" value="Ribosomal_uL5_B"/>
    <property type="match status" value="1"/>
</dbReference>
<dbReference type="InterPro" id="IPR002132">
    <property type="entry name" value="Ribosomal_uL5"/>
</dbReference>
<dbReference type="InterPro" id="IPR020930">
    <property type="entry name" value="Ribosomal_uL5_bac-type"/>
</dbReference>
<dbReference type="InterPro" id="IPR031309">
    <property type="entry name" value="Ribosomal_uL5_C"/>
</dbReference>
<dbReference type="InterPro" id="IPR020929">
    <property type="entry name" value="Ribosomal_uL5_CS"/>
</dbReference>
<dbReference type="InterPro" id="IPR022803">
    <property type="entry name" value="Ribosomal_uL5_dom_sf"/>
</dbReference>
<dbReference type="InterPro" id="IPR031310">
    <property type="entry name" value="Ribosomal_uL5_N"/>
</dbReference>
<dbReference type="NCBIfam" id="NF000585">
    <property type="entry name" value="PRK00010.1"/>
    <property type="match status" value="1"/>
</dbReference>
<dbReference type="PANTHER" id="PTHR11994">
    <property type="entry name" value="60S RIBOSOMAL PROTEIN L11-RELATED"/>
    <property type="match status" value="1"/>
</dbReference>
<dbReference type="Pfam" id="PF00281">
    <property type="entry name" value="Ribosomal_L5"/>
    <property type="match status" value="1"/>
</dbReference>
<dbReference type="Pfam" id="PF00673">
    <property type="entry name" value="Ribosomal_L5_C"/>
    <property type="match status" value="1"/>
</dbReference>
<dbReference type="PIRSF" id="PIRSF002161">
    <property type="entry name" value="Ribosomal_L5"/>
    <property type="match status" value="1"/>
</dbReference>
<dbReference type="SUPFAM" id="SSF55282">
    <property type="entry name" value="RL5-like"/>
    <property type="match status" value="1"/>
</dbReference>
<dbReference type="PROSITE" id="PS00358">
    <property type="entry name" value="RIBOSOMAL_L5"/>
    <property type="match status" value="1"/>
</dbReference>
<accession>Q1R0G3</accession>
<reference key="1">
    <citation type="journal article" date="2011" name="Stand. Genomic Sci.">
        <title>Complete genome sequence of the halophilic and highly halotolerant Chromohalobacter salexigens type strain (1H11(T)).</title>
        <authorList>
            <person name="Copeland A."/>
            <person name="O'Connor K."/>
            <person name="Lucas S."/>
            <person name="Lapidus A."/>
            <person name="Berry K.W."/>
            <person name="Detter J.C."/>
            <person name="Del Rio T.G."/>
            <person name="Hammon N."/>
            <person name="Dalin E."/>
            <person name="Tice H."/>
            <person name="Pitluck S."/>
            <person name="Bruce D."/>
            <person name="Goodwin L."/>
            <person name="Han C."/>
            <person name="Tapia R."/>
            <person name="Saunders E."/>
            <person name="Schmutz J."/>
            <person name="Brettin T."/>
            <person name="Larimer F."/>
            <person name="Land M."/>
            <person name="Hauser L."/>
            <person name="Vargas C."/>
            <person name="Nieto J.J."/>
            <person name="Kyrpides N.C."/>
            <person name="Ivanova N."/>
            <person name="Goker M."/>
            <person name="Klenk H.P."/>
            <person name="Csonka L.N."/>
            <person name="Woyke T."/>
        </authorList>
    </citation>
    <scope>NUCLEOTIDE SEQUENCE [LARGE SCALE GENOMIC DNA]</scope>
    <source>
        <strain>ATCC BAA-138 / DSM 3043 / CIP 106854 / NCIMB 13768 / 1H11</strain>
    </source>
</reference>
<gene>
    <name evidence="1" type="primary">rplE</name>
    <name type="ordered locus">Csal_0433</name>
</gene>
<proteinExistence type="inferred from homology"/>
<name>RL5_CHRSD</name>
<keyword id="KW-1185">Reference proteome</keyword>
<keyword id="KW-0687">Ribonucleoprotein</keyword>
<keyword id="KW-0689">Ribosomal protein</keyword>
<keyword id="KW-0694">RNA-binding</keyword>
<keyword id="KW-0699">rRNA-binding</keyword>
<keyword id="KW-0820">tRNA-binding</keyword>
<sequence length="179" mass="20380">MANLKERYQNEVAAQLQEQFSYANVMQIPRITKVTLNMGIGDATSDKKLIDNAMGDLEKLSGQRPVITKARKSIAGFKVREGWPIGIKVTLRSERMWDFLDRLVNIAIPRVRDFRGLNPKSFDGRGNYSMGVREQIIFPELEYDKIDRIRGLDVTITTTANTDEEGRALLSALNFPFKK</sequence>
<organism>
    <name type="scientific">Chromohalobacter salexigens (strain ATCC BAA-138 / DSM 3043 / CIP 106854 / NCIMB 13768 / 1H11)</name>
    <dbReference type="NCBI Taxonomy" id="290398"/>
    <lineage>
        <taxon>Bacteria</taxon>
        <taxon>Pseudomonadati</taxon>
        <taxon>Pseudomonadota</taxon>
        <taxon>Gammaproteobacteria</taxon>
        <taxon>Oceanospirillales</taxon>
        <taxon>Halomonadaceae</taxon>
        <taxon>Chromohalobacter</taxon>
    </lineage>
</organism>
<comment type="function">
    <text evidence="1">This is one of the proteins that bind and probably mediate the attachment of the 5S RNA into the large ribosomal subunit, where it forms part of the central protuberance. In the 70S ribosome it contacts protein S13 of the 30S subunit (bridge B1b), connecting the 2 subunits; this bridge is implicated in subunit movement. Contacts the P site tRNA; the 5S rRNA and some of its associated proteins might help stabilize positioning of ribosome-bound tRNAs.</text>
</comment>
<comment type="subunit">
    <text evidence="1">Part of the 50S ribosomal subunit; part of the 5S rRNA/L5/L18/L25 subcomplex. Contacts the 5S rRNA and the P site tRNA. Forms a bridge to the 30S subunit in the 70S ribosome.</text>
</comment>
<comment type="similarity">
    <text evidence="1">Belongs to the universal ribosomal protein uL5 family.</text>
</comment>
<evidence type="ECO:0000255" key="1">
    <source>
        <dbReference type="HAMAP-Rule" id="MF_01333"/>
    </source>
</evidence>
<evidence type="ECO:0000305" key="2"/>
<protein>
    <recommendedName>
        <fullName evidence="1">Large ribosomal subunit protein uL5</fullName>
    </recommendedName>
    <alternativeName>
        <fullName evidence="2">50S ribosomal protein L5</fullName>
    </alternativeName>
</protein>
<feature type="chain" id="PRO_1000052717" description="Large ribosomal subunit protein uL5">
    <location>
        <begin position="1"/>
        <end position="179"/>
    </location>
</feature>